<keyword id="KW-1283">Bacterial microcompartment</keyword>
<keyword id="KW-0846">Cobalamin</keyword>
<keyword id="KW-0170">Cobalt</keyword>
<keyword id="KW-0456">Lyase</keyword>
<keyword id="KW-1185">Reference proteome</keyword>
<name>EUTC_BRADU</name>
<feature type="chain" id="PRO_0000205984" description="Ethanolamine ammonia-lyase small subunit">
    <location>
        <begin position="1"/>
        <end position="261"/>
    </location>
</feature>
<feature type="binding site" evidence="1">
    <location>
        <position position="158"/>
    </location>
    <ligand>
        <name>adenosylcob(III)alamin</name>
        <dbReference type="ChEBI" id="CHEBI:18408"/>
    </ligand>
</feature>
<feature type="binding site" evidence="1">
    <location>
        <position position="179"/>
    </location>
    <ligand>
        <name>adenosylcob(III)alamin</name>
        <dbReference type="ChEBI" id="CHEBI:18408"/>
    </ligand>
</feature>
<feature type="binding site" evidence="1">
    <location>
        <position position="208"/>
    </location>
    <ligand>
        <name>adenosylcob(III)alamin</name>
        <dbReference type="ChEBI" id="CHEBI:18408"/>
    </ligand>
</feature>
<comment type="function">
    <text evidence="1">Catalyzes the deamination of various vicinal amino-alcohols to oxo compounds. Allows this organism to utilize ethanolamine as the sole source of nitrogen and carbon in the presence of external vitamin B12.</text>
</comment>
<comment type="catalytic activity">
    <reaction evidence="1">
        <text>ethanolamine = acetaldehyde + NH4(+)</text>
        <dbReference type="Rhea" id="RHEA:15313"/>
        <dbReference type="ChEBI" id="CHEBI:15343"/>
        <dbReference type="ChEBI" id="CHEBI:28938"/>
        <dbReference type="ChEBI" id="CHEBI:57603"/>
        <dbReference type="EC" id="4.3.1.7"/>
    </reaction>
</comment>
<comment type="cofactor">
    <cofactor evidence="1">
        <name>adenosylcob(III)alamin</name>
        <dbReference type="ChEBI" id="CHEBI:18408"/>
    </cofactor>
    <text evidence="1">Binds between the large and small subunits.</text>
</comment>
<comment type="pathway">
    <text evidence="1">Amine and polyamine degradation; ethanolamine degradation.</text>
</comment>
<comment type="subunit">
    <text evidence="1">The basic unit is a heterodimer which dimerizes to form tetramers. The heterotetramers trimerize; 6 large subunits form a core ring with 6 small subunits projecting outwards.</text>
</comment>
<comment type="subcellular location">
    <subcellularLocation>
        <location evidence="1">Bacterial microcompartment</location>
    </subcellularLocation>
</comment>
<comment type="similarity">
    <text evidence="1 2">Belongs to the EutC family.</text>
</comment>
<organism>
    <name type="scientific">Bradyrhizobium diazoefficiens (strain JCM 10833 / BCRC 13528 / IAM 13628 / NBRC 14792 / USDA 110)</name>
    <dbReference type="NCBI Taxonomy" id="224911"/>
    <lineage>
        <taxon>Bacteria</taxon>
        <taxon>Pseudomonadati</taxon>
        <taxon>Pseudomonadota</taxon>
        <taxon>Alphaproteobacteria</taxon>
        <taxon>Hyphomicrobiales</taxon>
        <taxon>Nitrobacteraceae</taxon>
        <taxon>Bradyrhizobium</taxon>
    </lineage>
</organism>
<reference key="1">
    <citation type="journal article" date="2002" name="DNA Res.">
        <title>Complete genomic sequence of nitrogen-fixing symbiotic bacterium Bradyrhizobium japonicum USDA110.</title>
        <authorList>
            <person name="Kaneko T."/>
            <person name="Nakamura Y."/>
            <person name="Sato S."/>
            <person name="Minamisawa K."/>
            <person name="Uchiumi T."/>
            <person name="Sasamoto S."/>
            <person name="Watanabe A."/>
            <person name="Idesawa K."/>
            <person name="Iriguchi M."/>
            <person name="Kawashima K."/>
            <person name="Kohara M."/>
            <person name="Matsumoto M."/>
            <person name="Shimpo S."/>
            <person name="Tsuruoka H."/>
            <person name="Wada T."/>
            <person name="Yamada M."/>
            <person name="Tabata S."/>
        </authorList>
    </citation>
    <scope>NUCLEOTIDE SEQUENCE [LARGE SCALE GENOMIC DNA]</scope>
    <source>
        <strain>JCM 10833 / BCRC 13528 / IAM 13628 / NBRC 14792 / USDA 110</strain>
    </source>
</reference>
<accession>Q89QX6</accession>
<sequence length="261" mass="27360">MSDPAVPRRPTLDLRSFTPARVALGRSGASVPTRALLDFTLDHARARDAVHAVFDVPRLLADLGALGLAVTEARSRAADRRDYLRRPDLGRQLDAGSIEALARIASRPCQLAIVIGDGLSAAAVHAHAVALVTRLLPLLAADDAVALGHVVVASGARVALGDQIGAILGARMVVTLIGERPGLSAPDSLGAYLTFAPTPGRTDAERNCVSNIHHAGLSNDEAAFKIAWLLREGLAREVTGVALKDESADRAPRRIGTSLPE</sequence>
<evidence type="ECO:0000255" key="1">
    <source>
        <dbReference type="HAMAP-Rule" id="MF_00601"/>
    </source>
</evidence>
<evidence type="ECO:0000305" key="2"/>
<proteinExistence type="inferred from homology"/>
<protein>
    <recommendedName>
        <fullName evidence="1">Ethanolamine ammonia-lyase small subunit</fullName>
        <shortName evidence="1">EAL small subunit</shortName>
        <ecNumber evidence="1">4.3.1.7</ecNumber>
    </recommendedName>
</protein>
<dbReference type="EC" id="4.3.1.7" evidence="1"/>
<dbReference type="EMBL" id="BA000040">
    <property type="protein sequence ID" value="BAC48261.1"/>
    <property type="molecule type" value="Genomic_DNA"/>
</dbReference>
<dbReference type="RefSeq" id="NP_769636.1">
    <property type="nucleotide sequence ID" value="NC_004463.1"/>
</dbReference>
<dbReference type="RefSeq" id="WP_011085780.1">
    <property type="nucleotide sequence ID" value="NC_004463.1"/>
</dbReference>
<dbReference type="SMR" id="Q89QX6"/>
<dbReference type="FunCoup" id="Q89QX6">
    <property type="interactions" value="31"/>
</dbReference>
<dbReference type="STRING" id="224911.AAV28_11990"/>
<dbReference type="EnsemblBacteria" id="BAC48261">
    <property type="protein sequence ID" value="BAC48261"/>
    <property type="gene ID" value="BAC48261"/>
</dbReference>
<dbReference type="GeneID" id="46490034"/>
<dbReference type="KEGG" id="bja:blr2996"/>
<dbReference type="PATRIC" id="fig|224911.44.peg.2621"/>
<dbReference type="eggNOG" id="COG4302">
    <property type="taxonomic scope" value="Bacteria"/>
</dbReference>
<dbReference type="HOGENOM" id="CLU_068224_1_0_5"/>
<dbReference type="InParanoid" id="Q89QX6"/>
<dbReference type="OrthoDB" id="114248at2"/>
<dbReference type="PhylomeDB" id="Q89QX6"/>
<dbReference type="UniPathway" id="UPA00560"/>
<dbReference type="Proteomes" id="UP000002526">
    <property type="component" value="Chromosome"/>
</dbReference>
<dbReference type="GO" id="GO:0009350">
    <property type="term" value="C:ethanolamine ammonia-lyase complex"/>
    <property type="evidence" value="ECO:0000318"/>
    <property type="project" value="GO_Central"/>
</dbReference>
<dbReference type="GO" id="GO:0031471">
    <property type="term" value="C:ethanolamine degradation polyhedral organelle"/>
    <property type="evidence" value="ECO:0007669"/>
    <property type="project" value="UniProtKB-UniRule"/>
</dbReference>
<dbReference type="GO" id="GO:0031419">
    <property type="term" value="F:cobalamin binding"/>
    <property type="evidence" value="ECO:0007669"/>
    <property type="project" value="UniProtKB-UniRule"/>
</dbReference>
<dbReference type="GO" id="GO:0008851">
    <property type="term" value="F:ethanolamine ammonia-lyase activity"/>
    <property type="evidence" value="ECO:0007669"/>
    <property type="project" value="UniProtKB-UniRule"/>
</dbReference>
<dbReference type="GO" id="GO:0006520">
    <property type="term" value="P:amino acid metabolic process"/>
    <property type="evidence" value="ECO:0007669"/>
    <property type="project" value="InterPro"/>
</dbReference>
<dbReference type="GO" id="GO:0046336">
    <property type="term" value="P:ethanolamine catabolic process"/>
    <property type="evidence" value="ECO:0007669"/>
    <property type="project" value="UniProtKB-UniRule"/>
</dbReference>
<dbReference type="Gene3D" id="3.40.50.11240">
    <property type="entry name" value="Ethanolamine ammonia-lyase light chain (EutC)"/>
    <property type="match status" value="1"/>
</dbReference>
<dbReference type="Gene3D" id="1.10.30.40">
    <property type="entry name" value="Ethanolamine ammonia-lyase light chain (EutC), N-terminal domain"/>
    <property type="match status" value="1"/>
</dbReference>
<dbReference type="HAMAP" id="MF_00601">
    <property type="entry name" value="EutC"/>
    <property type="match status" value="1"/>
</dbReference>
<dbReference type="InterPro" id="IPR009246">
    <property type="entry name" value="EutC"/>
</dbReference>
<dbReference type="InterPro" id="IPR042251">
    <property type="entry name" value="EutC_C"/>
</dbReference>
<dbReference type="InterPro" id="IPR042255">
    <property type="entry name" value="EutC_N"/>
</dbReference>
<dbReference type="NCBIfam" id="NF003971">
    <property type="entry name" value="PRK05465.1"/>
    <property type="match status" value="1"/>
</dbReference>
<dbReference type="PANTHER" id="PTHR39330">
    <property type="entry name" value="ETHANOLAMINE AMMONIA-LYASE LIGHT CHAIN"/>
    <property type="match status" value="1"/>
</dbReference>
<dbReference type="PANTHER" id="PTHR39330:SF1">
    <property type="entry name" value="ETHANOLAMINE AMMONIA-LYASE SMALL SUBUNIT"/>
    <property type="match status" value="1"/>
</dbReference>
<dbReference type="Pfam" id="PF05985">
    <property type="entry name" value="EutC"/>
    <property type="match status" value="1"/>
</dbReference>
<dbReference type="PIRSF" id="PIRSF018982">
    <property type="entry name" value="EutC"/>
    <property type="match status" value="1"/>
</dbReference>
<gene>
    <name evidence="1" type="primary">eutC</name>
    <name type="ordered locus">blr2996</name>
</gene>